<name>NUOB1_RHOPT</name>
<keyword id="KW-0004">4Fe-4S</keyword>
<keyword id="KW-0997">Cell inner membrane</keyword>
<keyword id="KW-1003">Cell membrane</keyword>
<keyword id="KW-0408">Iron</keyword>
<keyword id="KW-0411">Iron-sulfur</keyword>
<keyword id="KW-0472">Membrane</keyword>
<keyword id="KW-0479">Metal-binding</keyword>
<keyword id="KW-0520">NAD</keyword>
<keyword id="KW-0874">Quinone</keyword>
<keyword id="KW-1278">Translocase</keyword>
<keyword id="KW-0813">Transport</keyword>
<keyword id="KW-0830">Ubiquinone</keyword>
<evidence type="ECO:0000255" key="1">
    <source>
        <dbReference type="HAMAP-Rule" id="MF_01356"/>
    </source>
</evidence>
<accession>B3Q7N5</accession>
<sequence length="198" mass="21799">MQPTPSQHPVGAQPLIARPATGIIDPNTGRPVGADDPFFLNVNRELSDKGFFVAATDDLITWARTGSLMWMTFGLACCAVEMMQLSMPRYDAERFGFAPRASPRQSDVMIVAGTLTNKMAPALRKVYDQMPEPRYVISMGSCANGGGYYHYSYSVVRGCDRIVPIDIYVPGCPPTAEALLYGVMLLQKKIRRTGTIER</sequence>
<organism>
    <name type="scientific">Rhodopseudomonas palustris (strain TIE-1)</name>
    <dbReference type="NCBI Taxonomy" id="395960"/>
    <lineage>
        <taxon>Bacteria</taxon>
        <taxon>Pseudomonadati</taxon>
        <taxon>Pseudomonadota</taxon>
        <taxon>Alphaproteobacteria</taxon>
        <taxon>Hyphomicrobiales</taxon>
        <taxon>Nitrobacteraceae</taxon>
        <taxon>Rhodopseudomonas</taxon>
    </lineage>
</organism>
<reference key="1">
    <citation type="submission" date="2008-05" db="EMBL/GenBank/DDBJ databases">
        <title>Complete sequence of Rhodopseudomonas palustris TIE-1.</title>
        <authorList>
            <consortium name="US DOE Joint Genome Institute"/>
            <person name="Lucas S."/>
            <person name="Copeland A."/>
            <person name="Lapidus A."/>
            <person name="Glavina del Rio T."/>
            <person name="Dalin E."/>
            <person name="Tice H."/>
            <person name="Pitluck S."/>
            <person name="Chain P."/>
            <person name="Malfatti S."/>
            <person name="Shin M."/>
            <person name="Vergez L."/>
            <person name="Lang D."/>
            <person name="Schmutz J."/>
            <person name="Larimer F."/>
            <person name="Land M."/>
            <person name="Hauser L."/>
            <person name="Kyrpides N."/>
            <person name="Mikhailova N."/>
            <person name="Emerson D."/>
            <person name="Newman D.K."/>
            <person name="Roden E."/>
            <person name="Richardson P."/>
        </authorList>
    </citation>
    <scope>NUCLEOTIDE SEQUENCE [LARGE SCALE GENOMIC DNA]</scope>
    <source>
        <strain>TIE-1</strain>
    </source>
</reference>
<comment type="function">
    <text evidence="1">NDH-1 shuttles electrons from NADH, via FMN and iron-sulfur (Fe-S) centers, to quinones in the respiratory chain. The immediate electron acceptor for the enzyme in this species is believed to be ubiquinone. Couples the redox reaction to proton translocation (for every two electrons transferred, four hydrogen ions are translocated across the cytoplasmic membrane), and thus conserves the redox energy in a proton gradient.</text>
</comment>
<comment type="catalytic activity">
    <reaction evidence="1">
        <text>a quinone + NADH + 5 H(+)(in) = a quinol + NAD(+) + 4 H(+)(out)</text>
        <dbReference type="Rhea" id="RHEA:57888"/>
        <dbReference type="ChEBI" id="CHEBI:15378"/>
        <dbReference type="ChEBI" id="CHEBI:24646"/>
        <dbReference type="ChEBI" id="CHEBI:57540"/>
        <dbReference type="ChEBI" id="CHEBI:57945"/>
        <dbReference type="ChEBI" id="CHEBI:132124"/>
    </reaction>
</comment>
<comment type="cofactor">
    <cofactor evidence="1">
        <name>[4Fe-4S] cluster</name>
        <dbReference type="ChEBI" id="CHEBI:49883"/>
    </cofactor>
    <text evidence="1">Binds 1 [4Fe-4S] cluster.</text>
</comment>
<comment type="subunit">
    <text evidence="1">NDH-1 is composed of 14 different subunits. Subunits NuoB, C, D, E, F, and G constitute the peripheral sector of the complex.</text>
</comment>
<comment type="subcellular location">
    <subcellularLocation>
        <location evidence="1">Cell inner membrane</location>
        <topology evidence="1">Peripheral membrane protein</topology>
        <orientation evidence="1">Cytoplasmic side</orientation>
    </subcellularLocation>
</comment>
<comment type="similarity">
    <text evidence="1">Belongs to the complex I 20 kDa subunit family.</text>
</comment>
<dbReference type="EC" id="7.1.1.-" evidence="1"/>
<dbReference type="EMBL" id="CP001096">
    <property type="protein sequence ID" value="ACF01801.1"/>
    <property type="molecule type" value="Genomic_DNA"/>
</dbReference>
<dbReference type="RefSeq" id="WP_011158500.1">
    <property type="nucleotide sequence ID" value="NC_011004.1"/>
</dbReference>
<dbReference type="SMR" id="B3Q7N5"/>
<dbReference type="KEGG" id="rpt:Rpal_3299"/>
<dbReference type="HOGENOM" id="CLU_055737_7_0_5"/>
<dbReference type="OrthoDB" id="9786737at2"/>
<dbReference type="Proteomes" id="UP000001725">
    <property type="component" value="Chromosome"/>
</dbReference>
<dbReference type="GO" id="GO:0005886">
    <property type="term" value="C:plasma membrane"/>
    <property type="evidence" value="ECO:0007669"/>
    <property type="project" value="UniProtKB-SubCell"/>
</dbReference>
<dbReference type="GO" id="GO:0045271">
    <property type="term" value="C:respiratory chain complex I"/>
    <property type="evidence" value="ECO:0007669"/>
    <property type="project" value="TreeGrafter"/>
</dbReference>
<dbReference type="GO" id="GO:0051539">
    <property type="term" value="F:4 iron, 4 sulfur cluster binding"/>
    <property type="evidence" value="ECO:0007669"/>
    <property type="project" value="UniProtKB-KW"/>
</dbReference>
<dbReference type="GO" id="GO:0005506">
    <property type="term" value="F:iron ion binding"/>
    <property type="evidence" value="ECO:0007669"/>
    <property type="project" value="UniProtKB-UniRule"/>
</dbReference>
<dbReference type="GO" id="GO:0008137">
    <property type="term" value="F:NADH dehydrogenase (ubiquinone) activity"/>
    <property type="evidence" value="ECO:0007669"/>
    <property type="project" value="InterPro"/>
</dbReference>
<dbReference type="GO" id="GO:0050136">
    <property type="term" value="F:NADH:ubiquinone reductase (non-electrogenic) activity"/>
    <property type="evidence" value="ECO:0007669"/>
    <property type="project" value="UniProtKB-UniRule"/>
</dbReference>
<dbReference type="GO" id="GO:0048038">
    <property type="term" value="F:quinone binding"/>
    <property type="evidence" value="ECO:0007669"/>
    <property type="project" value="UniProtKB-KW"/>
</dbReference>
<dbReference type="GO" id="GO:0009060">
    <property type="term" value="P:aerobic respiration"/>
    <property type="evidence" value="ECO:0007669"/>
    <property type="project" value="TreeGrafter"/>
</dbReference>
<dbReference type="GO" id="GO:0015990">
    <property type="term" value="P:electron transport coupled proton transport"/>
    <property type="evidence" value="ECO:0007669"/>
    <property type="project" value="TreeGrafter"/>
</dbReference>
<dbReference type="FunFam" id="3.40.50.12280:FF:000001">
    <property type="entry name" value="NADH-quinone oxidoreductase subunit B 2"/>
    <property type="match status" value="1"/>
</dbReference>
<dbReference type="Gene3D" id="3.40.50.12280">
    <property type="match status" value="1"/>
</dbReference>
<dbReference type="HAMAP" id="MF_01356">
    <property type="entry name" value="NDH1_NuoB"/>
    <property type="match status" value="1"/>
</dbReference>
<dbReference type="InterPro" id="IPR006137">
    <property type="entry name" value="NADH_UbQ_OxRdtase-like_20kDa"/>
</dbReference>
<dbReference type="InterPro" id="IPR006138">
    <property type="entry name" value="NADH_UQ_OxRdtase_20Kd_su"/>
</dbReference>
<dbReference type="NCBIfam" id="TIGR01957">
    <property type="entry name" value="nuoB_fam"/>
    <property type="match status" value="1"/>
</dbReference>
<dbReference type="NCBIfam" id="NF005012">
    <property type="entry name" value="PRK06411.1"/>
    <property type="match status" value="1"/>
</dbReference>
<dbReference type="PANTHER" id="PTHR11995">
    <property type="entry name" value="NADH DEHYDROGENASE"/>
    <property type="match status" value="1"/>
</dbReference>
<dbReference type="PANTHER" id="PTHR11995:SF14">
    <property type="entry name" value="NADH DEHYDROGENASE [UBIQUINONE] IRON-SULFUR PROTEIN 7, MITOCHONDRIAL"/>
    <property type="match status" value="1"/>
</dbReference>
<dbReference type="Pfam" id="PF01058">
    <property type="entry name" value="Oxidored_q6"/>
    <property type="match status" value="1"/>
</dbReference>
<dbReference type="SUPFAM" id="SSF56770">
    <property type="entry name" value="HydA/Nqo6-like"/>
    <property type="match status" value="1"/>
</dbReference>
<dbReference type="PROSITE" id="PS01150">
    <property type="entry name" value="COMPLEX1_20K"/>
    <property type="match status" value="1"/>
</dbReference>
<proteinExistence type="inferred from homology"/>
<protein>
    <recommendedName>
        <fullName evidence="1">NADH-quinone oxidoreductase subunit B 1</fullName>
        <ecNumber evidence="1">7.1.1.-</ecNumber>
    </recommendedName>
    <alternativeName>
        <fullName evidence="1">NADH dehydrogenase I subunit B 1</fullName>
    </alternativeName>
    <alternativeName>
        <fullName evidence="1">NDH-1 subunit B 1</fullName>
    </alternativeName>
</protein>
<feature type="chain" id="PRO_0000376345" description="NADH-quinone oxidoreductase subunit B 1">
    <location>
        <begin position="1"/>
        <end position="198"/>
    </location>
</feature>
<feature type="binding site" evidence="1">
    <location>
        <position position="77"/>
    </location>
    <ligand>
        <name>[4Fe-4S] cluster</name>
        <dbReference type="ChEBI" id="CHEBI:49883"/>
    </ligand>
</feature>
<feature type="binding site" evidence="1">
    <location>
        <position position="78"/>
    </location>
    <ligand>
        <name>[4Fe-4S] cluster</name>
        <dbReference type="ChEBI" id="CHEBI:49883"/>
    </ligand>
</feature>
<feature type="binding site" evidence="1">
    <location>
        <position position="142"/>
    </location>
    <ligand>
        <name>[4Fe-4S] cluster</name>
        <dbReference type="ChEBI" id="CHEBI:49883"/>
    </ligand>
</feature>
<feature type="binding site" evidence="1">
    <location>
        <position position="172"/>
    </location>
    <ligand>
        <name>[4Fe-4S] cluster</name>
        <dbReference type="ChEBI" id="CHEBI:49883"/>
    </ligand>
</feature>
<gene>
    <name evidence="1" type="primary">nuoB1</name>
    <name type="ordered locus">Rpal_3299</name>
</gene>